<accession>Q9SL45</accession>
<evidence type="ECO:0000250" key="1">
    <source>
        <dbReference type="UniProtKB" id="O65648"/>
    </source>
</evidence>
<evidence type="ECO:0000250" key="2">
    <source>
        <dbReference type="UniProtKB" id="Q9FJG1"/>
    </source>
</evidence>
<evidence type="ECO:0000269" key="3">
    <source>
    </source>
</evidence>
<evidence type="ECO:0000269" key="4">
    <source>
    </source>
</evidence>
<evidence type="ECO:0000269" key="5">
    <source>
    </source>
</evidence>
<evidence type="ECO:0000303" key="6">
    <source>
    </source>
</evidence>
<evidence type="ECO:0000305" key="7"/>
<evidence type="ECO:0000312" key="8">
    <source>
        <dbReference type="Araport" id="AT2G18010"/>
    </source>
</evidence>
<evidence type="ECO:0000312" key="9">
    <source>
        <dbReference type="EMBL" id="AAD20125.1"/>
    </source>
</evidence>
<keyword id="KW-1003">Cell membrane</keyword>
<keyword id="KW-0217">Developmental protein</keyword>
<keyword id="KW-0341">Growth regulation</keyword>
<keyword id="KW-0472">Membrane</keyword>
<keyword id="KW-1185">Reference proteome</keyword>
<name>SAU10_ARATH</name>
<reference key="1">
    <citation type="journal article" date="1999" name="Nature">
        <title>Sequence and analysis of chromosome 2 of the plant Arabidopsis thaliana.</title>
        <authorList>
            <person name="Lin X."/>
            <person name="Kaul S."/>
            <person name="Rounsley S.D."/>
            <person name="Shea T.P."/>
            <person name="Benito M.-I."/>
            <person name="Town C.D."/>
            <person name="Fujii C.Y."/>
            <person name="Mason T.M."/>
            <person name="Bowman C.L."/>
            <person name="Barnstead M.E."/>
            <person name="Feldblyum T.V."/>
            <person name="Buell C.R."/>
            <person name="Ketchum K.A."/>
            <person name="Lee J.J."/>
            <person name="Ronning C.M."/>
            <person name="Koo H.L."/>
            <person name="Moffat K.S."/>
            <person name="Cronin L.A."/>
            <person name="Shen M."/>
            <person name="Pai G."/>
            <person name="Van Aken S."/>
            <person name="Umayam L."/>
            <person name="Tallon L.J."/>
            <person name="Gill J.E."/>
            <person name="Adams M.D."/>
            <person name="Carrera A.J."/>
            <person name="Creasy T.H."/>
            <person name="Goodman H.M."/>
            <person name="Somerville C.R."/>
            <person name="Copenhaver G.P."/>
            <person name="Preuss D."/>
            <person name="Nierman W.C."/>
            <person name="White O."/>
            <person name="Eisen J.A."/>
            <person name="Salzberg S.L."/>
            <person name="Fraser C.M."/>
            <person name="Venter J.C."/>
        </authorList>
    </citation>
    <scope>NUCLEOTIDE SEQUENCE [LARGE SCALE GENOMIC DNA]</scope>
    <source>
        <strain>cv. Columbia</strain>
    </source>
</reference>
<reference key="2">
    <citation type="journal article" date="2017" name="Plant J.">
        <title>Araport11: a complete reannotation of the Arabidopsis thaliana reference genome.</title>
        <authorList>
            <person name="Cheng C.Y."/>
            <person name="Krishnakumar V."/>
            <person name="Chan A.P."/>
            <person name="Thibaud-Nissen F."/>
            <person name="Schobel S."/>
            <person name="Town C.D."/>
        </authorList>
    </citation>
    <scope>GENOME REANNOTATION</scope>
    <source>
        <strain>cv. Columbia</strain>
    </source>
</reference>
<reference key="3">
    <citation type="journal article" date="2005" name="Plant Cell">
        <title>The evolutionarily conserved TOUGH protein is required for proper development of Arabidopsis thaliana.</title>
        <authorList>
            <person name="Calderon-Villalobos L.I.A."/>
            <person name="Kuhnle C."/>
            <person name="Dohmann E.M.N."/>
            <person name="Li H."/>
            <person name="Bevan M."/>
            <person name="Schwechheimer C."/>
        </authorList>
    </citation>
    <scope>INDUCTION BY AUXIN</scope>
</reference>
<reference key="4">
    <citation type="journal article" date="2017" name="BMC Plant Biol.">
        <title>Divergent regulation of Arabidopsis SAUR genes: a focus on the SAUR10-clade.</title>
        <authorList>
            <person name="van Mourik H."/>
            <person name="van Dijk A.D.J."/>
            <person name="Stortenbeker N."/>
            <person name="Angenent G.C."/>
            <person name="Bemer M."/>
        </authorList>
    </citation>
    <scope>FUNCTION</scope>
    <scope>TISSUE SPECIFICITY</scope>
    <scope>DEVELOPMENTAL STAGE</scope>
    <scope>INDUCTION BY AUXIN; BRASSINOSTEROIDS AND REDUCED R:FR LIGHT CONDITIONS</scope>
    <scope>GENE FAMILY</scope>
    <source>
        <strain>cv. Columbia</strain>
    </source>
</reference>
<reference key="5">
    <citation type="journal article" date="2017" name="J. Exp. Bot.">
        <title>FRUITFULL controls SAUR10 expression and regulates Arabidopsis growth and architecture.</title>
        <authorList>
            <person name="Bemer M."/>
            <person name="van Mourik H."/>
            <person name="Muino J.M."/>
            <person name="Ferrandiz C."/>
            <person name="Kaufmann K."/>
            <person name="Angenent G.C."/>
        </authorList>
    </citation>
    <scope>FUNCTION</scope>
    <scope>INDUCTION BY AUXIN; BRASSINOSTEROIDS AND RED LIGHT</scope>
    <scope>TISSUE SPECIFICITY</scope>
    <scope>DEVELOPMENTAL STAGE</scope>
    <source>
        <strain>cv. Columbia</strain>
    </source>
</reference>
<comment type="function">
    <text evidence="1 4 5">Provide a mechanistic link between auxin and plasma membrane H(+)-ATPases (PM H(+)-ATPases, e.g. AHA1 and AHA2), and triggers PM H(+)-ATPases activity by promoting phosphorylation of their C-terminal autoinhibitory domain as a result of PP2C-D subfamily of type 2C phosphatases inhibition, thus leading to the acidification of the apoplast and the facilitation of solutes and water uptake to drive cell expansion (By similarity). Triggers plant growth probably by promoting cell elongation (PubMed:28586421, PubMed:29258424). Regulates branch angles and bending (PubMed:28586421, PubMed:29258424).</text>
</comment>
<comment type="subcellular location">
    <subcellularLocation>
        <location evidence="2">Cell membrane</location>
        <topology evidence="2">Peripheral membrane protein</topology>
    </subcellularLocation>
</comment>
<comment type="tissue specificity">
    <text evidence="4 5">Confined to the veins and petioles of rosette leaves and cauline leaves, and specifically expressed at the abaxial side of inflorescence branche; relocates to both the adaxial (Ad) and abaxial (Ab) sides of the branch in reduced red:far-red (R:FR) light, during shade (PubMed:28586421, PubMed:29258424). Also present in flowers (PubMed:28586421, PubMed:29258424).</text>
</comment>
<comment type="developmental stage">
    <text evidence="4 5">Appears at later stages of developing flowers, in the vasculature of the style, and in the apical parts of the stamen filaments and petals.</text>
</comment>
<comment type="induction">
    <text evidence="3 4 5">Induced by auxin (e.g. 2,4D) (PubMed:16024589, PubMed:28586421, PubMed:29258424). Up-regulated by brassinosteroids (e.g. brassinolide) (PubMed:29258424). Highly induced by a synergistic combination of auxin (e.g. IAA) and brassinolide. Accumulates in response to reduced red:far-red (R:FR) light, during shade; this light response can be attenuated by AGL8/FUL in the stem. Repressed by AGL8/FUL in stems and inflorescence branches (PubMed:28586421). Accumulates in reduced red/far-red light ration (R:FR) conditions mimicking shaded conditions (PubMed:29258424).</text>
</comment>
<comment type="similarity">
    <text evidence="7">Belongs to the ARG7 family.</text>
</comment>
<sequence>MAIKRSSKATSSQAASIKQIVKRCSSLRKMKNVNGCYYNQEDDLPQDVPKGHFPVYVGPNRSRYIVPISWLHHSEFQTLLRLAEEEFGFDHDMGLTIPCDEVFFRSLISMFR</sequence>
<protein>
    <recommendedName>
        <fullName evidence="6">Protein SMALL AUXIN UP-REGULATED RNA 10</fullName>
    </recommendedName>
</protein>
<proteinExistence type="evidence at transcript level"/>
<feature type="chain" id="PRO_0000444886" description="Protein SMALL AUXIN UP-REGULATED RNA 10">
    <location>
        <begin position="1"/>
        <end position="112"/>
    </location>
</feature>
<dbReference type="EMBL" id="AC006201">
    <property type="protein sequence ID" value="AAD20125.1"/>
    <property type="molecule type" value="Genomic_DNA"/>
</dbReference>
<dbReference type="EMBL" id="CP002685">
    <property type="protein sequence ID" value="AEC06715.1"/>
    <property type="molecule type" value="Genomic_DNA"/>
</dbReference>
<dbReference type="PIR" id="B84559">
    <property type="entry name" value="B84559"/>
</dbReference>
<dbReference type="RefSeq" id="NP_001318243.1">
    <property type="nucleotide sequence ID" value="NM_001335577.1"/>
</dbReference>
<dbReference type="FunCoup" id="Q9SL45">
    <property type="interactions" value="289"/>
</dbReference>
<dbReference type="STRING" id="3702.Q9SL45"/>
<dbReference type="PaxDb" id="3702-AT2G18010.1"/>
<dbReference type="ProteomicsDB" id="226689"/>
<dbReference type="EnsemblPlants" id="AT2G18010.1">
    <property type="protein sequence ID" value="AT2G18010.1"/>
    <property type="gene ID" value="AT2G18010"/>
</dbReference>
<dbReference type="GeneID" id="28718283"/>
<dbReference type="Gramene" id="AT2G18010.1">
    <property type="protein sequence ID" value="AT2G18010.1"/>
    <property type="gene ID" value="AT2G18010"/>
</dbReference>
<dbReference type="KEGG" id="ath:AT2G18010"/>
<dbReference type="Araport" id="AT2G18010"/>
<dbReference type="TAIR" id="AT2G18010">
    <property type="gene designation" value="SAUR10"/>
</dbReference>
<dbReference type="HOGENOM" id="CLU_098106_2_3_1"/>
<dbReference type="InParanoid" id="Q9SL45"/>
<dbReference type="OMA" id="PIFWLTH"/>
<dbReference type="PhylomeDB" id="Q9SL45"/>
<dbReference type="PRO" id="PR:Q9SL45"/>
<dbReference type="Proteomes" id="UP000006548">
    <property type="component" value="Chromosome 2"/>
</dbReference>
<dbReference type="ExpressionAtlas" id="Q9SL45">
    <property type="expression patterns" value="baseline and differential"/>
</dbReference>
<dbReference type="GO" id="GO:0005886">
    <property type="term" value="C:plasma membrane"/>
    <property type="evidence" value="ECO:0007669"/>
    <property type="project" value="UniProtKB-SubCell"/>
</dbReference>
<dbReference type="GO" id="GO:0060560">
    <property type="term" value="P:developmental growth involved in morphogenesis"/>
    <property type="evidence" value="ECO:0000314"/>
    <property type="project" value="UniProtKB"/>
</dbReference>
<dbReference type="GO" id="GO:0051510">
    <property type="term" value="P:regulation of unidimensional cell growth"/>
    <property type="evidence" value="ECO:0000315"/>
    <property type="project" value="UniProtKB"/>
</dbReference>
<dbReference type="GO" id="GO:0009733">
    <property type="term" value="P:response to auxin"/>
    <property type="evidence" value="ECO:0000270"/>
    <property type="project" value="UniProtKB"/>
</dbReference>
<dbReference type="GO" id="GO:0009741">
    <property type="term" value="P:response to brassinosteroid"/>
    <property type="evidence" value="ECO:0000270"/>
    <property type="project" value="UniProtKB"/>
</dbReference>
<dbReference type="GO" id="GO:0010202">
    <property type="term" value="P:response to low fluence red light stimulus"/>
    <property type="evidence" value="ECO:0000270"/>
    <property type="project" value="UniProtKB"/>
</dbReference>
<dbReference type="GO" id="GO:0009639">
    <property type="term" value="P:response to red or far red light"/>
    <property type="evidence" value="ECO:0000270"/>
    <property type="project" value="UniProtKB"/>
</dbReference>
<dbReference type="GO" id="GO:0009641">
    <property type="term" value="P:shade avoidance"/>
    <property type="evidence" value="ECO:0000270"/>
    <property type="project" value="UniProtKB"/>
</dbReference>
<dbReference type="InterPro" id="IPR003676">
    <property type="entry name" value="SAUR_fam"/>
</dbReference>
<dbReference type="PANTHER" id="PTHR31374">
    <property type="entry name" value="AUXIN-INDUCED PROTEIN-LIKE-RELATED"/>
    <property type="match status" value="1"/>
</dbReference>
<dbReference type="PANTHER" id="PTHR31374:SF184">
    <property type="entry name" value="PROTEIN SMALL AUXIN UP-REGULATED RNA 10"/>
    <property type="match status" value="1"/>
</dbReference>
<dbReference type="Pfam" id="PF02519">
    <property type="entry name" value="Auxin_inducible"/>
    <property type="match status" value="1"/>
</dbReference>
<organism>
    <name type="scientific">Arabidopsis thaliana</name>
    <name type="common">Mouse-ear cress</name>
    <dbReference type="NCBI Taxonomy" id="3702"/>
    <lineage>
        <taxon>Eukaryota</taxon>
        <taxon>Viridiplantae</taxon>
        <taxon>Streptophyta</taxon>
        <taxon>Embryophyta</taxon>
        <taxon>Tracheophyta</taxon>
        <taxon>Spermatophyta</taxon>
        <taxon>Magnoliopsida</taxon>
        <taxon>eudicotyledons</taxon>
        <taxon>Gunneridae</taxon>
        <taxon>Pentapetalae</taxon>
        <taxon>rosids</taxon>
        <taxon>malvids</taxon>
        <taxon>Brassicales</taxon>
        <taxon>Brassicaceae</taxon>
        <taxon>Camelineae</taxon>
        <taxon>Arabidopsis</taxon>
    </lineage>
</organism>
<gene>
    <name evidence="6" type="primary">SAUR10</name>
    <name evidence="8" type="ordered locus">At2g18010</name>
    <name evidence="9" type="ORF">T27K22.12</name>
</gene>